<reference key="1">
    <citation type="journal article" date="2010" name="Environ. Microbiol.">
        <title>The genome of Syntrophomonas wolfei: new insights into syntrophic metabolism and biohydrogen production.</title>
        <authorList>
            <person name="Sieber J.R."/>
            <person name="Sims D.R."/>
            <person name="Han C."/>
            <person name="Kim E."/>
            <person name="Lykidis A."/>
            <person name="Lapidus A.L."/>
            <person name="McDonnald E."/>
            <person name="Rohlin L."/>
            <person name="Culley D.E."/>
            <person name="Gunsalus R."/>
            <person name="McInerney M.J."/>
        </authorList>
    </citation>
    <scope>NUCLEOTIDE SEQUENCE [LARGE SCALE GENOMIC DNA]</scope>
    <source>
        <strain>DSM 2245B / Goettingen</strain>
    </source>
</reference>
<sequence>MNRKGILFVISGPSGVGKGTLKKALLDQTKDLNLSISATTRPARLGEVHGQHYFFVDQAKFREMIEQDAFLEWAQVYSNLYGTPRGFVLNHLQQGRDVLLEIDIQGALQVKEKMPSGVFIFIYPPNLEELAFRLVSRGQDSQDSIEARLAACENELKHIDYYDYLVVNDKIDRALQKITAIIIAERCKIKNLNMR</sequence>
<feature type="chain" id="PRO_0000266425" description="Guanylate kinase">
    <location>
        <begin position="1"/>
        <end position="195"/>
    </location>
</feature>
<feature type="domain" description="Guanylate kinase-like" evidence="1">
    <location>
        <begin position="5"/>
        <end position="183"/>
    </location>
</feature>
<feature type="binding site" evidence="1">
    <location>
        <begin position="12"/>
        <end position="19"/>
    </location>
    <ligand>
        <name>ATP</name>
        <dbReference type="ChEBI" id="CHEBI:30616"/>
    </ligand>
</feature>
<evidence type="ECO:0000255" key="1">
    <source>
        <dbReference type="HAMAP-Rule" id="MF_00328"/>
    </source>
</evidence>
<dbReference type="EC" id="2.7.4.8" evidence="1"/>
<dbReference type="EMBL" id="CP000448">
    <property type="protein sequence ID" value="ABI68546.1"/>
    <property type="molecule type" value="Genomic_DNA"/>
</dbReference>
<dbReference type="RefSeq" id="WP_011640649.1">
    <property type="nucleotide sequence ID" value="NC_008346.1"/>
</dbReference>
<dbReference type="SMR" id="Q0AXK8"/>
<dbReference type="STRING" id="335541.Swol_1237"/>
<dbReference type="KEGG" id="swo:Swol_1237"/>
<dbReference type="eggNOG" id="COG0194">
    <property type="taxonomic scope" value="Bacteria"/>
</dbReference>
<dbReference type="HOGENOM" id="CLU_001715_1_2_9"/>
<dbReference type="OrthoDB" id="9808150at2"/>
<dbReference type="Proteomes" id="UP000001968">
    <property type="component" value="Chromosome"/>
</dbReference>
<dbReference type="GO" id="GO:0005829">
    <property type="term" value="C:cytosol"/>
    <property type="evidence" value="ECO:0007669"/>
    <property type="project" value="TreeGrafter"/>
</dbReference>
<dbReference type="GO" id="GO:0005524">
    <property type="term" value="F:ATP binding"/>
    <property type="evidence" value="ECO:0007669"/>
    <property type="project" value="UniProtKB-UniRule"/>
</dbReference>
<dbReference type="GO" id="GO:0004385">
    <property type="term" value="F:guanylate kinase activity"/>
    <property type="evidence" value="ECO:0007669"/>
    <property type="project" value="UniProtKB-UniRule"/>
</dbReference>
<dbReference type="CDD" id="cd00071">
    <property type="entry name" value="GMPK"/>
    <property type="match status" value="1"/>
</dbReference>
<dbReference type="FunFam" id="3.40.50.300:FF:000855">
    <property type="entry name" value="Guanylate kinase"/>
    <property type="match status" value="1"/>
</dbReference>
<dbReference type="FunFam" id="3.30.63.10:FF:000002">
    <property type="entry name" value="Guanylate kinase 1"/>
    <property type="match status" value="1"/>
</dbReference>
<dbReference type="Gene3D" id="3.30.63.10">
    <property type="entry name" value="Guanylate Kinase phosphate binding domain"/>
    <property type="match status" value="1"/>
</dbReference>
<dbReference type="Gene3D" id="3.40.50.300">
    <property type="entry name" value="P-loop containing nucleotide triphosphate hydrolases"/>
    <property type="match status" value="2"/>
</dbReference>
<dbReference type="HAMAP" id="MF_00328">
    <property type="entry name" value="Guanylate_kinase"/>
    <property type="match status" value="1"/>
</dbReference>
<dbReference type="InterPro" id="IPR008145">
    <property type="entry name" value="GK/Ca_channel_bsu"/>
</dbReference>
<dbReference type="InterPro" id="IPR008144">
    <property type="entry name" value="Guanylate_kin-like_dom"/>
</dbReference>
<dbReference type="InterPro" id="IPR017665">
    <property type="entry name" value="Guanylate_kinase"/>
</dbReference>
<dbReference type="InterPro" id="IPR020590">
    <property type="entry name" value="Guanylate_kinase_CS"/>
</dbReference>
<dbReference type="InterPro" id="IPR027417">
    <property type="entry name" value="P-loop_NTPase"/>
</dbReference>
<dbReference type="NCBIfam" id="TIGR03263">
    <property type="entry name" value="guanyl_kin"/>
    <property type="match status" value="1"/>
</dbReference>
<dbReference type="PANTHER" id="PTHR23117:SF13">
    <property type="entry name" value="GUANYLATE KINASE"/>
    <property type="match status" value="1"/>
</dbReference>
<dbReference type="PANTHER" id="PTHR23117">
    <property type="entry name" value="GUANYLATE KINASE-RELATED"/>
    <property type="match status" value="1"/>
</dbReference>
<dbReference type="Pfam" id="PF00625">
    <property type="entry name" value="Guanylate_kin"/>
    <property type="match status" value="1"/>
</dbReference>
<dbReference type="SMART" id="SM00072">
    <property type="entry name" value="GuKc"/>
    <property type="match status" value="1"/>
</dbReference>
<dbReference type="SUPFAM" id="SSF52540">
    <property type="entry name" value="P-loop containing nucleoside triphosphate hydrolases"/>
    <property type="match status" value="1"/>
</dbReference>
<dbReference type="PROSITE" id="PS00856">
    <property type="entry name" value="GUANYLATE_KINASE_1"/>
    <property type="match status" value="1"/>
</dbReference>
<dbReference type="PROSITE" id="PS50052">
    <property type="entry name" value="GUANYLATE_KINASE_2"/>
    <property type="match status" value="1"/>
</dbReference>
<organism>
    <name type="scientific">Syntrophomonas wolfei subsp. wolfei (strain DSM 2245B / Goettingen)</name>
    <dbReference type="NCBI Taxonomy" id="335541"/>
    <lineage>
        <taxon>Bacteria</taxon>
        <taxon>Bacillati</taxon>
        <taxon>Bacillota</taxon>
        <taxon>Clostridia</taxon>
        <taxon>Eubacteriales</taxon>
        <taxon>Syntrophomonadaceae</taxon>
        <taxon>Syntrophomonas</taxon>
    </lineage>
</organism>
<protein>
    <recommendedName>
        <fullName evidence="1">Guanylate kinase</fullName>
        <ecNumber evidence="1">2.7.4.8</ecNumber>
    </recommendedName>
    <alternativeName>
        <fullName evidence="1">GMP kinase</fullName>
    </alternativeName>
</protein>
<gene>
    <name evidence="1" type="primary">gmk</name>
    <name type="ordered locus">Swol_1237</name>
</gene>
<keyword id="KW-0067">ATP-binding</keyword>
<keyword id="KW-0963">Cytoplasm</keyword>
<keyword id="KW-0418">Kinase</keyword>
<keyword id="KW-0547">Nucleotide-binding</keyword>
<keyword id="KW-1185">Reference proteome</keyword>
<keyword id="KW-0808">Transferase</keyword>
<accession>Q0AXK8</accession>
<comment type="function">
    <text evidence="1">Essential for recycling GMP and indirectly, cGMP.</text>
</comment>
<comment type="catalytic activity">
    <reaction evidence="1">
        <text>GMP + ATP = GDP + ADP</text>
        <dbReference type="Rhea" id="RHEA:20780"/>
        <dbReference type="ChEBI" id="CHEBI:30616"/>
        <dbReference type="ChEBI" id="CHEBI:58115"/>
        <dbReference type="ChEBI" id="CHEBI:58189"/>
        <dbReference type="ChEBI" id="CHEBI:456216"/>
        <dbReference type="EC" id="2.7.4.8"/>
    </reaction>
</comment>
<comment type="subcellular location">
    <subcellularLocation>
        <location evidence="1">Cytoplasm</location>
    </subcellularLocation>
</comment>
<comment type="similarity">
    <text evidence="1">Belongs to the guanylate kinase family.</text>
</comment>
<proteinExistence type="inferred from homology"/>
<name>KGUA_SYNWW</name>